<organism>
    <name type="scientific">Pongo pygmaeus</name>
    <name type="common">Bornean orangutan</name>
    <dbReference type="NCBI Taxonomy" id="9600"/>
    <lineage>
        <taxon>Eukaryota</taxon>
        <taxon>Metazoa</taxon>
        <taxon>Chordata</taxon>
        <taxon>Craniata</taxon>
        <taxon>Vertebrata</taxon>
        <taxon>Euteleostomi</taxon>
        <taxon>Mammalia</taxon>
        <taxon>Eutheria</taxon>
        <taxon>Euarchontoglires</taxon>
        <taxon>Primates</taxon>
        <taxon>Haplorrhini</taxon>
        <taxon>Catarrhini</taxon>
        <taxon>Hominidae</taxon>
        <taxon>Pongo</taxon>
    </lineage>
</organism>
<gene>
    <name type="primary">AFF2</name>
</gene>
<reference key="1">
    <citation type="journal article" date="2003" name="Mol. Biol. Evol.">
        <title>Gene diversity patterns at 10 X-chromosomal loci in humans and chimpanzees.</title>
        <authorList>
            <person name="Kitano T."/>
            <person name="Schwarz C."/>
            <person name="Nickel B."/>
            <person name="Paeaebo S."/>
        </authorList>
    </citation>
    <scope>NUCLEOTIDE SEQUENCE [MRNA]</scope>
</reference>
<name>AFF2_PONPY</name>
<accession>Q7YQM1</accession>
<comment type="function">
    <text evidence="1">RNA-binding protein. Might be involved in alternative splicing regulation through an interaction with G-quartet RNA structure (By similarity).</text>
</comment>
<comment type="subcellular location">
    <subcellularLocation>
        <location evidence="1">Nucleus speckle</location>
    </subcellularLocation>
</comment>
<comment type="similarity">
    <text evidence="4">Belongs to the AF4 family.</text>
</comment>
<protein>
    <recommendedName>
        <fullName>AF4/FMR2 family member 2</fullName>
    </recommendedName>
</protein>
<proteinExistence type="evidence at transcript level"/>
<dbReference type="EMBL" id="AB102646">
    <property type="protein sequence ID" value="BAC81115.1"/>
    <property type="molecule type" value="mRNA"/>
</dbReference>
<dbReference type="RefSeq" id="XP_054328089.1">
    <property type="nucleotide sequence ID" value="XM_054472114.2"/>
</dbReference>
<dbReference type="SMR" id="Q7YQM1"/>
<dbReference type="GeneID" id="129024852"/>
<dbReference type="GO" id="GO:0016607">
    <property type="term" value="C:nuclear speck"/>
    <property type="evidence" value="ECO:0000250"/>
    <property type="project" value="UniProtKB"/>
</dbReference>
<dbReference type="GO" id="GO:0002151">
    <property type="term" value="F:G-quadruplex RNA binding"/>
    <property type="evidence" value="ECO:0000250"/>
    <property type="project" value="UniProtKB"/>
</dbReference>
<dbReference type="GO" id="GO:0006397">
    <property type="term" value="P:mRNA processing"/>
    <property type="evidence" value="ECO:0007669"/>
    <property type="project" value="UniProtKB-KW"/>
</dbReference>
<dbReference type="GO" id="GO:0043484">
    <property type="term" value="P:regulation of RNA splicing"/>
    <property type="evidence" value="ECO:0000250"/>
    <property type="project" value="UniProtKB"/>
</dbReference>
<dbReference type="GO" id="GO:0008380">
    <property type="term" value="P:RNA splicing"/>
    <property type="evidence" value="ECO:0007669"/>
    <property type="project" value="UniProtKB-KW"/>
</dbReference>
<dbReference type="Gene3D" id="6.10.250.2670">
    <property type="match status" value="1"/>
</dbReference>
<dbReference type="InterPro" id="IPR007797">
    <property type="entry name" value="AF4/FMR2"/>
</dbReference>
<dbReference type="InterPro" id="IPR043640">
    <property type="entry name" value="AF4/FMR2_CHD"/>
</dbReference>
<dbReference type="InterPro" id="IPR043639">
    <property type="entry name" value="AF4_int"/>
</dbReference>
<dbReference type="PANTHER" id="PTHR10528">
    <property type="entry name" value="AF4/FMR2 FAMILY MEMBER"/>
    <property type="match status" value="1"/>
</dbReference>
<dbReference type="PANTHER" id="PTHR10528:SF18">
    <property type="entry name" value="AF4_FMR2 FAMILY MEMBER 2"/>
    <property type="match status" value="1"/>
</dbReference>
<dbReference type="Pfam" id="PF05110">
    <property type="entry name" value="AF-4"/>
    <property type="match status" value="2"/>
</dbReference>
<dbReference type="Pfam" id="PF18875">
    <property type="entry name" value="AF4_int"/>
    <property type="match status" value="1"/>
</dbReference>
<dbReference type="Pfam" id="PF18876">
    <property type="entry name" value="AFF4_CHD"/>
    <property type="match status" value="1"/>
</dbReference>
<feature type="chain" id="PRO_0000215915" description="AF4/FMR2 family member 2">
    <location>
        <begin position="1"/>
        <end position="1272"/>
    </location>
</feature>
<feature type="region of interest" description="Disordered" evidence="3">
    <location>
        <begin position="93"/>
        <end position="183"/>
    </location>
</feature>
<feature type="region of interest" description="Disordered" evidence="3">
    <location>
        <begin position="200"/>
        <end position="223"/>
    </location>
</feature>
<feature type="region of interest" description="Disordered" evidence="3">
    <location>
        <begin position="418"/>
        <end position="491"/>
    </location>
</feature>
<feature type="region of interest" description="Disordered" evidence="3">
    <location>
        <begin position="535"/>
        <end position="687"/>
    </location>
</feature>
<feature type="region of interest" description="Disordered" evidence="3">
    <location>
        <begin position="779"/>
        <end position="829"/>
    </location>
</feature>
<feature type="region of interest" description="Disordered" evidence="3">
    <location>
        <begin position="842"/>
        <end position="903"/>
    </location>
</feature>
<feature type="compositionally biased region" description="Polar residues" evidence="3">
    <location>
        <begin position="97"/>
        <end position="107"/>
    </location>
</feature>
<feature type="compositionally biased region" description="Basic and acidic residues" evidence="3">
    <location>
        <begin position="151"/>
        <end position="160"/>
    </location>
</feature>
<feature type="compositionally biased region" description="Polar residues" evidence="3">
    <location>
        <begin position="161"/>
        <end position="183"/>
    </location>
</feature>
<feature type="compositionally biased region" description="Basic and acidic residues" evidence="3">
    <location>
        <begin position="212"/>
        <end position="223"/>
    </location>
</feature>
<feature type="compositionally biased region" description="Pro residues" evidence="3">
    <location>
        <begin position="426"/>
        <end position="438"/>
    </location>
</feature>
<feature type="compositionally biased region" description="Low complexity" evidence="3">
    <location>
        <begin position="439"/>
        <end position="452"/>
    </location>
</feature>
<feature type="compositionally biased region" description="Basic and acidic residues" evidence="3">
    <location>
        <begin position="543"/>
        <end position="558"/>
    </location>
</feature>
<feature type="compositionally biased region" description="Polar residues" evidence="3">
    <location>
        <begin position="576"/>
        <end position="586"/>
    </location>
</feature>
<feature type="compositionally biased region" description="Basic and acidic residues" evidence="3">
    <location>
        <begin position="616"/>
        <end position="629"/>
    </location>
</feature>
<feature type="compositionally biased region" description="Basic residues" evidence="3">
    <location>
        <begin position="630"/>
        <end position="640"/>
    </location>
</feature>
<feature type="compositionally biased region" description="Basic and acidic residues" evidence="3">
    <location>
        <begin position="818"/>
        <end position="829"/>
    </location>
</feature>
<feature type="compositionally biased region" description="Pro residues" evidence="3">
    <location>
        <begin position="844"/>
        <end position="853"/>
    </location>
</feature>
<feature type="compositionally biased region" description="Pro residues" evidence="3">
    <location>
        <begin position="874"/>
        <end position="883"/>
    </location>
</feature>
<feature type="modified residue" description="Phosphoserine" evidence="2">
    <location>
        <position position="391"/>
    </location>
</feature>
<feature type="modified residue" description="Phosphothreonine" evidence="2">
    <location>
        <position position="478"/>
    </location>
</feature>
<keyword id="KW-0507">mRNA processing</keyword>
<keyword id="KW-0508">mRNA splicing</keyword>
<keyword id="KW-0539">Nucleus</keyword>
<keyword id="KW-0597">Phosphoprotein</keyword>
<keyword id="KW-0694">RNA-binding</keyword>
<sequence length="1272" mass="140637">MDLFDFFRDWDLEQQCHYEQDRSALKKREWERRNQEVQQEEDLFSSGFDLFGEPYKTNKGDALANRVQNTLGNYDEMKDLLTNHSNQNHLVGIPKNSVPQNPNNKNEPSFFPEQKNRIIPPHQDNTHPSAPMPPPSVVILNSTLIHSNRKSKPEWSRDSHNPSTVLASQASGQPNKMQTLTQDQSQARLEDFFVYPAEQPQIGEVEESNPSAKEDSNPKSSGEDAFKEIFQSNSPEESEFAVQAPGSPLVASSLLAPSSGLSVQNFPPGLYCKTSMGQQKPTAYVRPMDGQDQAPDISPTLKPSIEFENSFGNLSFGTLLDGKPSAASSKTKLPKFTILQTSEVSLPSDPSCVEEILRESQHLTPGFTLQKWNDPTTRASTKMLEDDLKLSSDEDDLEPVKTLTTQCTATELYQAVEKAKPRNNPVNPPLATPQPPPAVQASGGSGSSSESESSSESDSDTESSTTDSESNEAPRVATPEPEPPSTNKWQLDKWLNKVTSQNKSFICGQNETPMETISLPPPIIQPMEVQMKVKTNASQVPAEPKERPLLSLIREKARPRPTQKIPETKALKHKLSTTSETVSQRTIGKKQPKKVEKNTSIDEFTWPKPNITSSTPKEKESVELHDPPRGRNKATAHKPAPRKEPRPNIPLAPEKKKYRGPGKIVPKSREFIETDSSTSDSNTDQEETLQIKVLPPCIISGGNTAKSKEICGASLTLSTLMNSSGSNNNLSISNEEPTFSPIPVMQTEMLSPLRDHENLKNLWVKIDLDLLSRVPGHNSLHAAPAKPDHKETATKPKRQTAVTAVEKPAPKGKRKHKPTEVAEKIPEKKQRLEEATTICLLPPCISPAPPHKPPNTRENNSSRRANRRKEEKLFPPPLSPLPEDPPRRRNVSGNNGPFGQDKNIAMTGQITSTKPKRNEGKFCATFKGISVNEGDTPKKASSATMTITNTAVATATVTATAIVTTTVTATATATATTTTTTTTISTITSTITTGLMDSSHLEMTSWAALPLLSSSSTNVRRPKLTFDDSVHNADYYMQEAKKLKHKADALFEKFGKAVNYADAALSFTECGNAMERDPLEAKSPYTMYSETVELLRYAMRLKNFASPLASDGDKKLAVLCYRCLSLLYLRMFKLKKDHAMKYSRSLMEYFKQNASKVAQIPSPWVGNGKNTPSPVSLNNVSPINAMGNCNNGPVTIPQRIHHMAASHVNITSNVLRGYEHWDMADKLTRENKEFFGDLDTLMGPLTQHSSMTNLVRYVRQGLCWLRIDAHLL</sequence>
<evidence type="ECO:0000250" key="1"/>
<evidence type="ECO:0000250" key="2">
    <source>
        <dbReference type="UniProtKB" id="P51816"/>
    </source>
</evidence>
<evidence type="ECO:0000256" key="3">
    <source>
        <dbReference type="SAM" id="MobiDB-lite"/>
    </source>
</evidence>
<evidence type="ECO:0000305" key="4"/>